<protein>
    <recommendedName>
        <fullName>Mannitol-1-phosphate 5-dehydrogenase</fullName>
        <shortName>M1PDH</shortName>
        <shortName>MPD</shortName>
        <shortName>MPDH</shortName>
        <ecNumber>1.1.1.17</ecNumber>
    </recommendedName>
</protein>
<dbReference type="EC" id="1.1.1.17"/>
<dbReference type="EMBL" id="AACD01000102">
    <property type="protein sequence ID" value="EAA57724.1"/>
    <property type="molecule type" value="Genomic_DNA"/>
</dbReference>
<dbReference type="EMBL" id="BN001301">
    <property type="protein sequence ID" value="CBF70437.1"/>
    <property type="molecule type" value="Genomic_DNA"/>
</dbReference>
<dbReference type="RefSeq" id="XP_663579.1">
    <property type="nucleotide sequence ID" value="XM_658487.1"/>
</dbReference>
<dbReference type="SMR" id="Q5B0F5"/>
<dbReference type="STRING" id="227321.Q5B0F5"/>
<dbReference type="EnsemblFungi" id="CBF70437">
    <property type="protein sequence ID" value="CBF70437"/>
    <property type="gene ID" value="ANIA_05975"/>
</dbReference>
<dbReference type="KEGG" id="ani:ANIA_05975"/>
<dbReference type="VEuPathDB" id="FungiDB:AN5975"/>
<dbReference type="eggNOG" id="ENOG502QVPN">
    <property type="taxonomic scope" value="Eukaryota"/>
</dbReference>
<dbReference type="HOGENOM" id="CLU_036089_0_1_1"/>
<dbReference type="InParanoid" id="Q5B0F5"/>
<dbReference type="OMA" id="APFIERK"/>
<dbReference type="OrthoDB" id="418169at2759"/>
<dbReference type="BRENDA" id="1.1.1.17">
    <property type="organism ID" value="517"/>
</dbReference>
<dbReference type="Proteomes" id="UP000000560">
    <property type="component" value="Chromosome I"/>
</dbReference>
<dbReference type="GO" id="GO:0005829">
    <property type="term" value="C:cytosol"/>
    <property type="evidence" value="ECO:0000318"/>
    <property type="project" value="GO_Central"/>
</dbReference>
<dbReference type="GO" id="GO:0005576">
    <property type="term" value="C:extracellular region"/>
    <property type="evidence" value="ECO:0000314"/>
    <property type="project" value="AspGD"/>
</dbReference>
<dbReference type="GO" id="GO:0008926">
    <property type="term" value="F:mannitol-1-phosphate 5-dehydrogenase activity"/>
    <property type="evidence" value="ECO:0000318"/>
    <property type="project" value="GO_Central"/>
</dbReference>
<dbReference type="GO" id="GO:0019592">
    <property type="term" value="P:mannitol catabolic process"/>
    <property type="evidence" value="ECO:0000318"/>
    <property type="project" value="GO_Central"/>
</dbReference>
<dbReference type="FunFam" id="1.10.1040.10:FF:000009">
    <property type="entry name" value="Mannitol-1-phosphate 5-dehydrogenase"/>
    <property type="match status" value="1"/>
</dbReference>
<dbReference type="FunFam" id="3.40.50.720:FF:000316">
    <property type="entry name" value="Mannitol-1-phosphate 5-dehydrogenase"/>
    <property type="match status" value="1"/>
</dbReference>
<dbReference type="Gene3D" id="1.10.1040.10">
    <property type="entry name" value="N-(1-d-carboxylethyl)-l-norvaline Dehydrogenase, domain 2"/>
    <property type="match status" value="1"/>
</dbReference>
<dbReference type="Gene3D" id="3.40.50.720">
    <property type="entry name" value="NAD(P)-binding Rossmann-like Domain"/>
    <property type="match status" value="1"/>
</dbReference>
<dbReference type="HAMAP" id="MF_00196">
    <property type="entry name" value="Mannitol_dehydrog"/>
    <property type="match status" value="1"/>
</dbReference>
<dbReference type="InterPro" id="IPR008927">
    <property type="entry name" value="6-PGluconate_DH-like_C_sf"/>
</dbReference>
<dbReference type="InterPro" id="IPR013328">
    <property type="entry name" value="6PGD_dom2"/>
</dbReference>
<dbReference type="InterPro" id="IPR023028">
    <property type="entry name" value="Mannitol_1_phos_5_DH"/>
</dbReference>
<dbReference type="InterPro" id="IPR000669">
    <property type="entry name" value="Mannitol_DH"/>
</dbReference>
<dbReference type="InterPro" id="IPR013118">
    <property type="entry name" value="Mannitol_DH_C"/>
</dbReference>
<dbReference type="InterPro" id="IPR013131">
    <property type="entry name" value="Mannitol_DH_N"/>
</dbReference>
<dbReference type="InterPro" id="IPR036291">
    <property type="entry name" value="NAD(P)-bd_dom_sf"/>
</dbReference>
<dbReference type="NCBIfam" id="NF002647">
    <property type="entry name" value="PRK02318.1-3"/>
    <property type="match status" value="1"/>
</dbReference>
<dbReference type="NCBIfam" id="NF002652">
    <property type="entry name" value="PRK02318.2-5"/>
    <property type="match status" value="1"/>
</dbReference>
<dbReference type="PANTHER" id="PTHR30524:SF0">
    <property type="entry name" value="ALTRONATE OXIDOREDUCTASE-RELATED"/>
    <property type="match status" value="1"/>
</dbReference>
<dbReference type="PANTHER" id="PTHR30524">
    <property type="entry name" value="MANNITOL-1-PHOSPHATE 5-DEHYDROGENASE"/>
    <property type="match status" value="1"/>
</dbReference>
<dbReference type="Pfam" id="PF01232">
    <property type="entry name" value="Mannitol_dh"/>
    <property type="match status" value="1"/>
</dbReference>
<dbReference type="Pfam" id="PF08125">
    <property type="entry name" value="Mannitol_dh_C"/>
    <property type="match status" value="1"/>
</dbReference>
<dbReference type="PRINTS" id="PR00084">
    <property type="entry name" value="MTLDHDRGNASE"/>
</dbReference>
<dbReference type="SUPFAM" id="SSF48179">
    <property type="entry name" value="6-phosphogluconate dehydrogenase C-terminal domain-like"/>
    <property type="match status" value="1"/>
</dbReference>
<dbReference type="SUPFAM" id="SSF51735">
    <property type="entry name" value="NAD(P)-binding Rossmann-fold domains"/>
    <property type="match status" value="1"/>
</dbReference>
<evidence type="ECO:0000250" key="1"/>
<evidence type="ECO:0000305" key="2"/>
<comment type="function">
    <text evidence="1">Catalyzes the NAD(H)-dependent interconversion of D-fructose 6-phosphate and D-mannitol 1-phosphate in the mannitol metabolic pathway.</text>
</comment>
<comment type="catalytic activity">
    <reaction>
        <text>D-mannitol 1-phosphate + NAD(+) = beta-D-fructose 6-phosphate + NADH + H(+)</text>
        <dbReference type="Rhea" id="RHEA:19661"/>
        <dbReference type="ChEBI" id="CHEBI:15378"/>
        <dbReference type="ChEBI" id="CHEBI:57540"/>
        <dbReference type="ChEBI" id="CHEBI:57634"/>
        <dbReference type="ChEBI" id="CHEBI:57945"/>
        <dbReference type="ChEBI" id="CHEBI:61381"/>
        <dbReference type="EC" id="1.1.1.17"/>
    </reaction>
</comment>
<comment type="subunit">
    <text evidence="1">Monomer.</text>
</comment>
<comment type="similarity">
    <text evidence="2">Belongs to the mannitol dehydrogenase family.</text>
</comment>
<sequence>MGKAIHFGGGNIGRGFVGEFLHEAGYEVVFVDVVDDLITSIQNTPSYEITEISEDGEKTKKITNYRALNSKSHEADVVQEIATADIVTCAVGPRVLQFIAPVIAKGLESRNVSTPLTVIACENAINATDTLRGHIEKKTKPEIISERAVFANCAIDRIVPNQPPNNGLNVRIEKYWEWVVEQTPFKEKGVAHPNVSAIHWVDKLDPYIERKLFTVNTGHATTAYYGHLAGKKTIADALHDPKIRENVHKVLDETASLIINKHGISEQEQKEYVDKIISRISNPYLEDGVERVGRAPLRKLSRNERFIGPASQLAERGLKFDALLGAIEQALRFQNVEGDEESKELAKILKEKTAEEATSELTELEKDHPLYSHVLERVRTVQQESK</sequence>
<reference key="1">
    <citation type="journal article" date="2005" name="Nature">
        <title>Sequencing of Aspergillus nidulans and comparative analysis with A. fumigatus and A. oryzae.</title>
        <authorList>
            <person name="Galagan J.E."/>
            <person name="Calvo S.E."/>
            <person name="Cuomo C."/>
            <person name="Ma L.-J."/>
            <person name="Wortman J.R."/>
            <person name="Batzoglou S."/>
            <person name="Lee S.-I."/>
            <person name="Bastuerkmen M."/>
            <person name="Spevak C.C."/>
            <person name="Clutterbuck J."/>
            <person name="Kapitonov V."/>
            <person name="Jurka J."/>
            <person name="Scazzocchio C."/>
            <person name="Farman M.L."/>
            <person name="Butler J."/>
            <person name="Purcell S."/>
            <person name="Harris S."/>
            <person name="Braus G.H."/>
            <person name="Draht O."/>
            <person name="Busch S."/>
            <person name="D'Enfert C."/>
            <person name="Bouchier C."/>
            <person name="Goldman G.H."/>
            <person name="Bell-Pedersen D."/>
            <person name="Griffiths-Jones S."/>
            <person name="Doonan J.H."/>
            <person name="Yu J."/>
            <person name="Vienken K."/>
            <person name="Pain A."/>
            <person name="Freitag M."/>
            <person name="Selker E.U."/>
            <person name="Archer D.B."/>
            <person name="Penalva M.A."/>
            <person name="Oakley B.R."/>
            <person name="Momany M."/>
            <person name="Tanaka T."/>
            <person name="Kumagai T."/>
            <person name="Asai K."/>
            <person name="Machida M."/>
            <person name="Nierman W.C."/>
            <person name="Denning D.W."/>
            <person name="Caddick M.X."/>
            <person name="Hynes M."/>
            <person name="Paoletti M."/>
            <person name="Fischer R."/>
            <person name="Miller B.L."/>
            <person name="Dyer P.S."/>
            <person name="Sachs M.S."/>
            <person name="Osmani S.A."/>
            <person name="Birren B.W."/>
        </authorList>
    </citation>
    <scope>NUCLEOTIDE SEQUENCE [LARGE SCALE GENOMIC DNA]</scope>
    <source>
        <strain>FGSC A4 / ATCC 38163 / CBS 112.46 / NRRL 194 / M139</strain>
    </source>
</reference>
<reference key="2">
    <citation type="journal article" date="2009" name="Fungal Genet. Biol.">
        <title>The 2008 update of the Aspergillus nidulans genome annotation: a community effort.</title>
        <authorList>
            <person name="Wortman J.R."/>
            <person name="Gilsenan J.M."/>
            <person name="Joardar V."/>
            <person name="Deegan J."/>
            <person name="Clutterbuck J."/>
            <person name="Andersen M.R."/>
            <person name="Archer D."/>
            <person name="Bencina M."/>
            <person name="Braus G."/>
            <person name="Coutinho P."/>
            <person name="von Dohren H."/>
            <person name="Doonan J."/>
            <person name="Driessen A.J."/>
            <person name="Durek P."/>
            <person name="Espeso E."/>
            <person name="Fekete E."/>
            <person name="Flipphi M."/>
            <person name="Estrada C.G."/>
            <person name="Geysens S."/>
            <person name="Goldman G."/>
            <person name="de Groot P.W."/>
            <person name="Hansen K."/>
            <person name="Harris S.D."/>
            <person name="Heinekamp T."/>
            <person name="Helmstaedt K."/>
            <person name="Henrissat B."/>
            <person name="Hofmann G."/>
            <person name="Homan T."/>
            <person name="Horio T."/>
            <person name="Horiuchi H."/>
            <person name="James S."/>
            <person name="Jones M."/>
            <person name="Karaffa L."/>
            <person name="Karanyi Z."/>
            <person name="Kato M."/>
            <person name="Keller N."/>
            <person name="Kelly D.E."/>
            <person name="Kiel J.A."/>
            <person name="Kim J.M."/>
            <person name="van der Klei I.J."/>
            <person name="Klis F.M."/>
            <person name="Kovalchuk A."/>
            <person name="Krasevec N."/>
            <person name="Kubicek C.P."/>
            <person name="Liu B."/>
            <person name="Maccabe A."/>
            <person name="Meyer V."/>
            <person name="Mirabito P."/>
            <person name="Miskei M."/>
            <person name="Mos M."/>
            <person name="Mullins J."/>
            <person name="Nelson D.R."/>
            <person name="Nielsen J."/>
            <person name="Oakley B.R."/>
            <person name="Osmani S.A."/>
            <person name="Pakula T."/>
            <person name="Paszewski A."/>
            <person name="Paulsen I."/>
            <person name="Pilsyk S."/>
            <person name="Pocsi I."/>
            <person name="Punt P.J."/>
            <person name="Ram A.F."/>
            <person name="Ren Q."/>
            <person name="Robellet X."/>
            <person name="Robson G."/>
            <person name="Seiboth B."/>
            <person name="van Solingen P."/>
            <person name="Specht T."/>
            <person name="Sun J."/>
            <person name="Taheri-Talesh N."/>
            <person name="Takeshita N."/>
            <person name="Ussery D."/>
            <person name="vanKuyk P.A."/>
            <person name="Visser H."/>
            <person name="van de Vondervoort P.J."/>
            <person name="de Vries R.P."/>
            <person name="Walton J."/>
            <person name="Xiang X."/>
            <person name="Xiong Y."/>
            <person name="Zeng A.P."/>
            <person name="Brandt B.W."/>
            <person name="Cornell M.J."/>
            <person name="van den Hondel C.A."/>
            <person name="Visser J."/>
            <person name="Oliver S.G."/>
            <person name="Turner G."/>
        </authorList>
    </citation>
    <scope>GENOME REANNOTATION</scope>
    <source>
        <strain>FGSC A4 / ATCC 38163 / CBS 112.46 / NRRL 194 / M139</strain>
    </source>
</reference>
<gene>
    <name type="primary">mpdA</name>
    <name type="ORF">AN5975</name>
</gene>
<name>MTLD_EMENI</name>
<accession>Q5B0F5</accession>
<accession>C8V3C0</accession>
<proteinExistence type="inferred from homology"/>
<feature type="chain" id="PRO_0000371527" description="Mannitol-1-phosphate 5-dehydrogenase">
    <location>
        <begin position="1"/>
        <end position="386"/>
    </location>
</feature>
<feature type="active site" evidence="1">
    <location>
        <position position="211"/>
    </location>
</feature>
<feature type="binding site" evidence="1">
    <location>
        <begin position="4"/>
        <end position="15"/>
    </location>
    <ligand>
        <name>NAD(+)</name>
        <dbReference type="ChEBI" id="CHEBI:57540"/>
    </ligand>
</feature>
<keyword id="KW-0520">NAD</keyword>
<keyword id="KW-0560">Oxidoreductase</keyword>
<keyword id="KW-1185">Reference proteome</keyword>
<organism>
    <name type="scientific">Emericella nidulans (strain FGSC A4 / ATCC 38163 / CBS 112.46 / NRRL 194 / M139)</name>
    <name type="common">Aspergillus nidulans</name>
    <dbReference type="NCBI Taxonomy" id="227321"/>
    <lineage>
        <taxon>Eukaryota</taxon>
        <taxon>Fungi</taxon>
        <taxon>Dikarya</taxon>
        <taxon>Ascomycota</taxon>
        <taxon>Pezizomycotina</taxon>
        <taxon>Eurotiomycetes</taxon>
        <taxon>Eurotiomycetidae</taxon>
        <taxon>Eurotiales</taxon>
        <taxon>Aspergillaceae</taxon>
        <taxon>Aspergillus</taxon>
        <taxon>Aspergillus subgen. Nidulantes</taxon>
    </lineage>
</organism>